<name>RNH2_HALS3</name>
<accession>B0R6T4</accession>
<proteinExistence type="inferred from homology"/>
<comment type="function">
    <text evidence="1">Endonuclease that specifically degrades the RNA of RNA-DNA hybrids.</text>
</comment>
<comment type="catalytic activity">
    <reaction evidence="1">
        <text>Endonucleolytic cleavage to 5'-phosphomonoester.</text>
        <dbReference type="EC" id="3.1.26.4"/>
    </reaction>
</comment>
<comment type="cofactor">
    <cofactor evidence="1">
        <name>Mn(2+)</name>
        <dbReference type="ChEBI" id="CHEBI:29035"/>
    </cofactor>
    <cofactor evidence="1">
        <name>Mg(2+)</name>
        <dbReference type="ChEBI" id="CHEBI:18420"/>
    </cofactor>
    <text evidence="1">Manganese or magnesium. Binds 1 divalent metal ion per monomer in the absence of substrate. May bind a second metal ion after substrate binding.</text>
</comment>
<comment type="subcellular location">
    <subcellularLocation>
        <location evidence="1">Cytoplasm</location>
    </subcellularLocation>
</comment>
<comment type="similarity">
    <text evidence="1">Belongs to the RNase HII family.</text>
</comment>
<evidence type="ECO:0000255" key="1">
    <source>
        <dbReference type="HAMAP-Rule" id="MF_00052"/>
    </source>
</evidence>
<evidence type="ECO:0000255" key="2">
    <source>
        <dbReference type="PROSITE-ProRule" id="PRU01319"/>
    </source>
</evidence>
<organism>
    <name type="scientific">Halobacterium salinarum (strain ATCC 29341 / DSM 671 / R1)</name>
    <dbReference type="NCBI Taxonomy" id="478009"/>
    <lineage>
        <taxon>Archaea</taxon>
        <taxon>Methanobacteriati</taxon>
        <taxon>Methanobacteriota</taxon>
        <taxon>Stenosarchaea group</taxon>
        <taxon>Halobacteria</taxon>
        <taxon>Halobacteriales</taxon>
        <taxon>Halobacteriaceae</taxon>
        <taxon>Halobacterium</taxon>
        <taxon>Halobacterium salinarum NRC-34001</taxon>
    </lineage>
</organism>
<gene>
    <name evidence="1" type="primary">rnhB</name>
    <name type="ordered locus">OE_3780F</name>
</gene>
<keyword id="KW-0963">Cytoplasm</keyword>
<keyword id="KW-0255">Endonuclease</keyword>
<keyword id="KW-0378">Hydrolase</keyword>
<keyword id="KW-0464">Manganese</keyword>
<keyword id="KW-0479">Metal-binding</keyword>
<keyword id="KW-0540">Nuclease</keyword>
<reference key="1">
    <citation type="journal article" date="2008" name="Genomics">
        <title>Evolution in the laboratory: the genome of Halobacterium salinarum strain R1 compared to that of strain NRC-1.</title>
        <authorList>
            <person name="Pfeiffer F."/>
            <person name="Schuster S.C."/>
            <person name="Broicher A."/>
            <person name="Falb M."/>
            <person name="Palm P."/>
            <person name="Rodewald K."/>
            <person name="Ruepp A."/>
            <person name="Soppa J."/>
            <person name="Tittor J."/>
            <person name="Oesterhelt D."/>
        </authorList>
    </citation>
    <scope>NUCLEOTIDE SEQUENCE [LARGE SCALE GENOMIC DNA]</scope>
    <source>
        <strain>ATCC 29341 / DSM 671 / R1</strain>
    </source>
</reference>
<feature type="chain" id="PRO_0000334975" description="Ribonuclease HII">
    <location>
        <begin position="1"/>
        <end position="212"/>
    </location>
</feature>
<feature type="domain" description="RNase H type-2" evidence="2">
    <location>
        <begin position="1"/>
        <end position="206"/>
    </location>
</feature>
<feature type="binding site" evidence="1">
    <location>
        <position position="7"/>
    </location>
    <ligand>
        <name>a divalent metal cation</name>
        <dbReference type="ChEBI" id="CHEBI:60240"/>
    </ligand>
</feature>
<feature type="binding site" evidence="1">
    <location>
        <position position="8"/>
    </location>
    <ligand>
        <name>a divalent metal cation</name>
        <dbReference type="ChEBI" id="CHEBI:60240"/>
    </ligand>
</feature>
<feature type="binding site" evidence="1">
    <location>
        <position position="100"/>
    </location>
    <ligand>
        <name>a divalent metal cation</name>
        <dbReference type="ChEBI" id="CHEBI:60240"/>
    </ligand>
</feature>
<sequence length="212" mass="22109">MARFGVDEAGKGPVLGSMFAAAVAGDPAAVPDGVADSKRLSADRRAELDDRVRASMRVGVAEVPVDRIDDPETDMNTLTVAAQADALGRVVADGMAGYVDAGDVNEQRFGRRVANRVAADVAVTAEHGADDEYDLVAAASIVAKVARDAHVDALAAAFDADIGSGYPSDSTTREFLAAYVREHGELPECARASWQTSRDALGAAEQSALDEF</sequence>
<dbReference type="EC" id="3.1.26.4" evidence="1"/>
<dbReference type="EMBL" id="AM774415">
    <property type="protein sequence ID" value="CAP14453.1"/>
    <property type="molecule type" value="Genomic_DNA"/>
</dbReference>
<dbReference type="RefSeq" id="WP_010903458.1">
    <property type="nucleotide sequence ID" value="NC_010364.1"/>
</dbReference>
<dbReference type="SMR" id="B0R6T4"/>
<dbReference type="EnsemblBacteria" id="CAP14453">
    <property type="protein sequence ID" value="CAP14453"/>
    <property type="gene ID" value="OE_3780F"/>
</dbReference>
<dbReference type="GeneID" id="89350172"/>
<dbReference type="KEGG" id="hsl:OE_3780F"/>
<dbReference type="HOGENOM" id="CLU_036532_0_4_2"/>
<dbReference type="PhylomeDB" id="B0R6T4"/>
<dbReference type="Proteomes" id="UP000001321">
    <property type="component" value="Chromosome"/>
</dbReference>
<dbReference type="GO" id="GO:0005737">
    <property type="term" value="C:cytoplasm"/>
    <property type="evidence" value="ECO:0007669"/>
    <property type="project" value="UniProtKB-SubCell"/>
</dbReference>
<dbReference type="GO" id="GO:0032299">
    <property type="term" value="C:ribonuclease H2 complex"/>
    <property type="evidence" value="ECO:0007669"/>
    <property type="project" value="TreeGrafter"/>
</dbReference>
<dbReference type="GO" id="GO:0030145">
    <property type="term" value="F:manganese ion binding"/>
    <property type="evidence" value="ECO:0007669"/>
    <property type="project" value="UniProtKB-UniRule"/>
</dbReference>
<dbReference type="GO" id="GO:0003723">
    <property type="term" value="F:RNA binding"/>
    <property type="evidence" value="ECO:0007669"/>
    <property type="project" value="InterPro"/>
</dbReference>
<dbReference type="GO" id="GO:0004523">
    <property type="term" value="F:RNA-DNA hybrid ribonuclease activity"/>
    <property type="evidence" value="ECO:0007669"/>
    <property type="project" value="UniProtKB-UniRule"/>
</dbReference>
<dbReference type="GO" id="GO:0043137">
    <property type="term" value="P:DNA replication, removal of RNA primer"/>
    <property type="evidence" value="ECO:0007669"/>
    <property type="project" value="TreeGrafter"/>
</dbReference>
<dbReference type="GO" id="GO:0006298">
    <property type="term" value="P:mismatch repair"/>
    <property type="evidence" value="ECO:0007669"/>
    <property type="project" value="TreeGrafter"/>
</dbReference>
<dbReference type="CDD" id="cd07180">
    <property type="entry name" value="RNase_HII_archaea_like"/>
    <property type="match status" value="1"/>
</dbReference>
<dbReference type="FunFam" id="1.10.10.460:FF:000001">
    <property type="entry name" value="Ribonuclease"/>
    <property type="match status" value="1"/>
</dbReference>
<dbReference type="Gene3D" id="3.30.420.10">
    <property type="entry name" value="Ribonuclease H-like superfamily/Ribonuclease H"/>
    <property type="match status" value="1"/>
</dbReference>
<dbReference type="Gene3D" id="1.10.10.460">
    <property type="entry name" value="Ribonuclease hii. Domain 2"/>
    <property type="match status" value="1"/>
</dbReference>
<dbReference type="HAMAP" id="MF_00052_A">
    <property type="entry name" value="RNase_HII_A"/>
    <property type="match status" value="1"/>
</dbReference>
<dbReference type="InterPro" id="IPR004649">
    <property type="entry name" value="RNase_H2_suA"/>
</dbReference>
<dbReference type="InterPro" id="IPR001352">
    <property type="entry name" value="RNase_HII/HIII"/>
</dbReference>
<dbReference type="InterPro" id="IPR024567">
    <property type="entry name" value="RNase_HII/HIII_dom"/>
</dbReference>
<dbReference type="InterPro" id="IPR020787">
    <property type="entry name" value="RNase_HII_arc"/>
</dbReference>
<dbReference type="InterPro" id="IPR023160">
    <property type="entry name" value="RNase_HII_hlx-loop-hlx_cap_dom"/>
</dbReference>
<dbReference type="InterPro" id="IPR012337">
    <property type="entry name" value="RNaseH-like_sf"/>
</dbReference>
<dbReference type="InterPro" id="IPR036397">
    <property type="entry name" value="RNaseH_sf"/>
</dbReference>
<dbReference type="NCBIfam" id="TIGR00729">
    <property type="entry name" value="ribonuclease HII"/>
    <property type="match status" value="1"/>
</dbReference>
<dbReference type="PANTHER" id="PTHR10954:SF23">
    <property type="entry name" value="RIBONUCLEASE"/>
    <property type="match status" value="1"/>
</dbReference>
<dbReference type="PANTHER" id="PTHR10954">
    <property type="entry name" value="RIBONUCLEASE H2 SUBUNIT A"/>
    <property type="match status" value="1"/>
</dbReference>
<dbReference type="Pfam" id="PF01351">
    <property type="entry name" value="RNase_HII"/>
    <property type="match status" value="1"/>
</dbReference>
<dbReference type="SUPFAM" id="SSF53098">
    <property type="entry name" value="Ribonuclease H-like"/>
    <property type="match status" value="1"/>
</dbReference>
<dbReference type="PROSITE" id="PS51975">
    <property type="entry name" value="RNASE_H_2"/>
    <property type="match status" value="1"/>
</dbReference>
<protein>
    <recommendedName>
        <fullName evidence="1">Ribonuclease HII</fullName>
        <shortName evidence="1">RNase HII</shortName>
        <ecNumber evidence="1">3.1.26.4</ecNumber>
    </recommendedName>
</protein>